<name>LEXA_EXIS2</name>
<dbReference type="EC" id="3.4.21.88" evidence="1"/>
<dbReference type="EMBL" id="CP001022">
    <property type="protein sequence ID" value="ACB60573.1"/>
    <property type="molecule type" value="Genomic_DNA"/>
</dbReference>
<dbReference type="RefSeq" id="WP_012369996.1">
    <property type="nucleotide sequence ID" value="NC_010556.1"/>
</dbReference>
<dbReference type="SMR" id="B1YE71"/>
<dbReference type="STRING" id="262543.Exig_1094"/>
<dbReference type="MEROPS" id="S24.001"/>
<dbReference type="KEGG" id="esi:Exig_1094"/>
<dbReference type="eggNOG" id="COG1974">
    <property type="taxonomic scope" value="Bacteria"/>
</dbReference>
<dbReference type="HOGENOM" id="CLU_066192_45_1_9"/>
<dbReference type="OrthoDB" id="9802364at2"/>
<dbReference type="Proteomes" id="UP000001681">
    <property type="component" value="Chromosome"/>
</dbReference>
<dbReference type="GO" id="GO:0003677">
    <property type="term" value="F:DNA binding"/>
    <property type="evidence" value="ECO:0007669"/>
    <property type="project" value="UniProtKB-UniRule"/>
</dbReference>
<dbReference type="GO" id="GO:0004252">
    <property type="term" value="F:serine-type endopeptidase activity"/>
    <property type="evidence" value="ECO:0007669"/>
    <property type="project" value="UniProtKB-UniRule"/>
</dbReference>
<dbReference type="GO" id="GO:0006281">
    <property type="term" value="P:DNA repair"/>
    <property type="evidence" value="ECO:0007669"/>
    <property type="project" value="UniProtKB-UniRule"/>
</dbReference>
<dbReference type="GO" id="GO:0006260">
    <property type="term" value="P:DNA replication"/>
    <property type="evidence" value="ECO:0007669"/>
    <property type="project" value="UniProtKB-UniRule"/>
</dbReference>
<dbReference type="GO" id="GO:0045892">
    <property type="term" value="P:negative regulation of DNA-templated transcription"/>
    <property type="evidence" value="ECO:0007669"/>
    <property type="project" value="UniProtKB-UniRule"/>
</dbReference>
<dbReference type="GO" id="GO:0006508">
    <property type="term" value="P:proteolysis"/>
    <property type="evidence" value="ECO:0007669"/>
    <property type="project" value="InterPro"/>
</dbReference>
<dbReference type="GO" id="GO:0009432">
    <property type="term" value="P:SOS response"/>
    <property type="evidence" value="ECO:0007669"/>
    <property type="project" value="UniProtKB-UniRule"/>
</dbReference>
<dbReference type="CDD" id="cd00090">
    <property type="entry name" value="HTH_ARSR"/>
    <property type="match status" value="1"/>
</dbReference>
<dbReference type="CDD" id="cd06529">
    <property type="entry name" value="S24_LexA-like"/>
    <property type="match status" value="1"/>
</dbReference>
<dbReference type="FunFam" id="1.10.10.10:FF:000009">
    <property type="entry name" value="LexA repressor"/>
    <property type="match status" value="1"/>
</dbReference>
<dbReference type="FunFam" id="2.10.109.10:FF:000001">
    <property type="entry name" value="LexA repressor"/>
    <property type="match status" value="1"/>
</dbReference>
<dbReference type="Gene3D" id="2.10.109.10">
    <property type="entry name" value="Umud Fragment, subunit A"/>
    <property type="match status" value="1"/>
</dbReference>
<dbReference type="Gene3D" id="1.10.10.10">
    <property type="entry name" value="Winged helix-like DNA-binding domain superfamily/Winged helix DNA-binding domain"/>
    <property type="match status" value="1"/>
</dbReference>
<dbReference type="HAMAP" id="MF_00015">
    <property type="entry name" value="LexA"/>
    <property type="match status" value="1"/>
</dbReference>
<dbReference type="InterPro" id="IPR011991">
    <property type="entry name" value="ArsR-like_HTH"/>
</dbReference>
<dbReference type="InterPro" id="IPR006200">
    <property type="entry name" value="LexA"/>
</dbReference>
<dbReference type="InterPro" id="IPR039418">
    <property type="entry name" value="LexA-like"/>
</dbReference>
<dbReference type="InterPro" id="IPR036286">
    <property type="entry name" value="LexA/Signal_pep-like_sf"/>
</dbReference>
<dbReference type="InterPro" id="IPR006199">
    <property type="entry name" value="LexA_DNA-bd_dom"/>
</dbReference>
<dbReference type="InterPro" id="IPR050077">
    <property type="entry name" value="LexA_repressor"/>
</dbReference>
<dbReference type="InterPro" id="IPR006197">
    <property type="entry name" value="Peptidase_S24_LexA"/>
</dbReference>
<dbReference type="InterPro" id="IPR015927">
    <property type="entry name" value="Peptidase_S24_S26A/B/C"/>
</dbReference>
<dbReference type="InterPro" id="IPR036388">
    <property type="entry name" value="WH-like_DNA-bd_sf"/>
</dbReference>
<dbReference type="InterPro" id="IPR036390">
    <property type="entry name" value="WH_DNA-bd_sf"/>
</dbReference>
<dbReference type="NCBIfam" id="TIGR00498">
    <property type="entry name" value="lexA"/>
    <property type="match status" value="1"/>
</dbReference>
<dbReference type="PANTHER" id="PTHR33516">
    <property type="entry name" value="LEXA REPRESSOR"/>
    <property type="match status" value="1"/>
</dbReference>
<dbReference type="PANTHER" id="PTHR33516:SF2">
    <property type="entry name" value="LEXA REPRESSOR-RELATED"/>
    <property type="match status" value="1"/>
</dbReference>
<dbReference type="Pfam" id="PF01726">
    <property type="entry name" value="LexA_DNA_bind"/>
    <property type="match status" value="1"/>
</dbReference>
<dbReference type="Pfam" id="PF00717">
    <property type="entry name" value="Peptidase_S24"/>
    <property type="match status" value="1"/>
</dbReference>
<dbReference type="PRINTS" id="PR00726">
    <property type="entry name" value="LEXASERPTASE"/>
</dbReference>
<dbReference type="SUPFAM" id="SSF51306">
    <property type="entry name" value="LexA/Signal peptidase"/>
    <property type="match status" value="1"/>
</dbReference>
<dbReference type="SUPFAM" id="SSF46785">
    <property type="entry name" value="Winged helix' DNA-binding domain"/>
    <property type="match status" value="1"/>
</dbReference>
<keyword id="KW-0068">Autocatalytic cleavage</keyword>
<keyword id="KW-0227">DNA damage</keyword>
<keyword id="KW-0234">DNA repair</keyword>
<keyword id="KW-0235">DNA replication</keyword>
<keyword id="KW-0238">DNA-binding</keyword>
<keyword id="KW-0378">Hydrolase</keyword>
<keyword id="KW-1185">Reference proteome</keyword>
<keyword id="KW-0678">Repressor</keyword>
<keyword id="KW-0742">SOS response</keyword>
<keyword id="KW-0804">Transcription</keyword>
<keyword id="KW-0805">Transcription regulation</keyword>
<protein>
    <recommendedName>
        <fullName evidence="1">LexA repressor</fullName>
        <ecNumber evidence="1">3.4.21.88</ecNumber>
    </recommendedName>
</protein>
<comment type="function">
    <text evidence="1">Represses a number of genes involved in the response to DNA damage (SOS response), including recA and lexA. In the presence of single-stranded DNA, RecA interacts with LexA causing an autocatalytic cleavage which disrupts the DNA-binding part of LexA, leading to derepression of the SOS regulon and eventually DNA repair.</text>
</comment>
<comment type="catalytic activity">
    <reaction evidence="1">
        <text>Hydrolysis of Ala-|-Gly bond in repressor LexA.</text>
        <dbReference type="EC" id="3.4.21.88"/>
    </reaction>
</comment>
<comment type="subunit">
    <text evidence="1">Homodimer.</text>
</comment>
<comment type="similarity">
    <text evidence="1">Belongs to the peptidase S24 family.</text>
</comment>
<sequence length="204" mass="22939">MRKMSKRQQEILDYIVAQVKLKGYPPSVREIGEAVGLASSSTVHGHLDRLEKRGLIRRDPTKPRAIEILLDKPEEDHEAIVHIPVIGKVTAGFPITAIENIEEHFPLPAHYVGNENVFMLTIDGESMINAGILDGDRVIVRQQNTAENGEIVVAMTEDSEATVKRFFLEDQQVRLQPENDSMDPMYFDNVSILGKVIGVYRTIH</sequence>
<organism>
    <name type="scientific">Exiguobacterium sibiricum (strain DSM 17290 / CCUG 55495 / CIP 109462 / JCM 13490 / 255-15)</name>
    <dbReference type="NCBI Taxonomy" id="262543"/>
    <lineage>
        <taxon>Bacteria</taxon>
        <taxon>Bacillati</taxon>
        <taxon>Bacillota</taxon>
        <taxon>Bacilli</taxon>
        <taxon>Bacillales</taxon>
        <taxon>Bacillales Family XII. Incertae Sedis</taxon>
        <taxon>Exiguobacterium</taxon>
    </lineage>
</organism>
<evidence type="ECO:0000255" key="1">
    <source>
        <dbReference type="HAMAP-Rule" id="MF_00015"/>
    </source>
</evidence>
<proteinExistence type="inferred from homology"/>
<accession>B1YE71</accession>
<reference key="1">
    <citation type="submission" date="2008-04" db="EMBL/GenBank/DDBJ databases">
        <title>Complete sequence of chromosome of Exiguobacterium sibiricum 255-15.</title>
        <authorList>
            <consortium name="US DOE Joint Genome Institute"/>
            <person name="Copeland A."/>
            <person name="Lucas S."/>
            <person name="Lapidus A."/>
            <person name="Glavina del Rio T."/>
            <person name="Dalin E."/>
            <person name="Tice H."/>
            <person name="Bruce D."/>
            <person name="Goodwin L."/>
            <person name="Pitluck S."/>
            <person name="Kiss H."/>
            <person name="Chertkov O."/>
            <person name="Monk C."/>
            <person name="Brettin T."/>
            <person name="Detter J.C."/>
            <person name="Han C."/>
            <person name="Kuske C.R."/>
            <person name="Schmutz J."/>
            <person name="Larimer F."/>
            <person name="Land M."/>
            <person name="Hauser L."/>
            <person name="Kyrpides N."/>
            <person name="Mikhailova N."/>
            <person name="Vishnivetskaya T."/>
            <person name="Rodrigues D.F."/>
            <person name="Gilichinsky D."/>
            <person name="Tiedje J."/>
            <person name="Richardson P."/>
        </authorList>
    </citation>
    <scope>NUCLEOTIDE SEQUENCE [LARGE SCALE GENOMIC DNA]</scope>
    <source>
        <strain>DSM 17290 / CCUG 55495 / CIP 109462 / JCM 13490 / 255-15</strain>
    </source>
</reference>
<gene>
    <name evidence="1" type="primary">lexA</name>
    <name type="ordered locus">Exig_1094</name>
</gene>
<feature type="chain" id="PRO_1000089565" description="LexA repressor">
    <location>
        <begin position="1"/>
        <end position="204"/>
    </location>
</feature>
<feature type="DNA-binding region" description="H-T-H motif" evidence="1">
    <location>
        <begin position="28"/>
        <end position="48"/>
    </location>
</feature>
<feature type="active site" description="For autocatalytic cleavage activity" evidence="1">
    <location>
        <position position="126"/>
    </location>
</feature>
<feature type="active site" description="For autocatalytic cleavage activity" evidence="1">
    <location>
        <position position="164"/>
    </location>
</feature>
<feature type="site" description="Cleavage; by autolysis" evidence="1">
    <location>
        <begin position="91"/>
        <end position="92"/>
    </location>
</feature>